<comment type="function">
    <text evidence="3">Involved in abiotic stress signaling. Tethered to plasma membrane (PM) and probably bound to phosphatidylinositol 4,5-bisphosphate. Abiotic stresses (drought, salt, H(2)O(2)) trigger phospholipase C mediated PM dislogement and plastidial and nucleocytosolic relocation of TULP3.</text>
</comment>
<comment type="subcellular location">
    <subcellularLocation>
        <location evidence="3">Cell membrane</location>
        <topology evidence="3">Peripheral membrane protein</topology>
    </subcellularLocation>
    <subcellularLocation>
        <location evidence="3">Plastid</location>
    </subcellularLocation>
    <subcellularLocation>
        <location evidence="3">Nucleus</location>
        <location evidence="3">Nucleoplasm</location>
    </subcellularLocation>
    <subcellularLocation>
        <location evidence="3">Cytoplasm</location>
    </subcellularLocation>
    <text evidence="3">Phospholipase C activity mediates the release from the plasma membrane and the relocation to plastids, cytoplasm and nucleus.</text>
</comment>
<comment type="alternative products">
    <event type="alternative splicing"/>
    <isoform>
        <id>Q8VY21-1</id>
        <name>1</name>
        <sequence type="displayed"/>
    </isoform>
    <text>A number of isoforms are produced. According to EST sequences.</text>
</comment>
<comment type="tissue specificity">
    <text evidence="2 3">Ubiquitous at low levels. Not detected in mature siliques.</text>
</comment>
<comment type="induction">
    <text evidence="3">Down-regulated by H(2)O(2) treatment.</text>
</comment>
<comment type="disruption phenotype">
    <text evidence="3">Reduced colonization of the roots by the mutualistic fungus Piriformospora indica.</text>
</comment>
<comment type="similarity">
    <text evidence="5">Belongs to the TUB family.</text>
</comment>
<comment type="sequence caution" evidence="5">
    <conflict type="erroneous gene model prediction">
        <sequence resource="EMBL-CDS" id="AAC63644"/>
    </conflict>
</comment>
<comment type="sequence caution" evidence="5">
    <conflict type="erroneous gene model prediction">
        <sequence resource="EMBL-CDS" id="AAM15124"/>
    </conflict>
</comment>
<organism>
    <name type="scientific">Arabidopsis thaliana</name>
    <name type="common">Mouse-ear cress</name>
    <dbReference type="NCBI Taxonomy" id="3702"/>
    <lineage>
        <taxon>Eukaryota</taxon>
        <taxon>Viridiplantae</taxon>
        <taxon>Streptophyta</taxon>
        <taxon>Embryophyta</taxon>
        <taxon>Tracheophyta</taxon>
        <taxon>Spermatophyta</taxon>
        <taxon>Magnoliopsida</taxon>
        <taxon>eudicotyledons</taxon>
        <taxon>Gunneridae</taxon>
        <taxon>Pentapetalae</taxon>
        <taxon>rosids</taxon>
        <taxon>malvids</taxon>
        <taxon>Brassicales</taxon>
        <taxon>Brassicaceae</taxon>
        <taxon>Camelineae</taxon>
        <taxon>Arabidopsis</taxon>
    </lineage>
</organism>
<dbReference type="EMBL" id="AY045774">
    <property type="protein sequence ID" value="AAK98802.1"/>
    <property type="molecule type" value="mRNA"/>
</dbReference>
<dbReference type="EMBL" id="AC005309">
    <property type="protein sequence ID" value="AAC63644.1"/>
    <property type="status" value="ALT_SEQ"/>
    <property type="molecule type" value="Genomic_DNA"/>
</dbReference>
<dbReference type="EMBL" id="AC006072">
    <property type="protein sequence ID" value="AAM15124.1"/>
    <property type="status" value="ALT_SEQ"/>
    <property type="molecule type" value="Genomic_DNA"/>
</dbReference>
<dbReference type="EMBL" id="CP002685">
    <property type="protein sequence ID" value="AEC10907.1"/>
    <property type="molecule type" value="Genomic_DNA"/>
</dbReference>
<dbReference type="EMBL" id="CP002685">
    <property type="protein sequence ID" value="AEC10908.1"/>
    <property type="molecule type" value="Genomic_DNA"/>
</dbReference>
<dbReference type="EMBL" id="AY074273">
    <property type="protein sequence ID" value="AAL66970.1"/>
    <property type="molecule type" value="mRNA"/>
</dbReference>
<dbReference type="EMBL" id="AY096604">
    <property type="protein sequence ID" value="AAM20254.1"/>
    <property type="molecule type" value="mRNA"/>
</dbReference>
<dbReference type="PIR" id="H84920">
    <property type="entry name" value="H84920"/>
</dbReference>
<dbReference type="RefSeq" id="NP_001031558.1">
    <molecule id="Q8VY21-1"/>
    <property type="nucleotide sequence ID" value="NM_001036481.1"/>
</dbReference>
<dbReference type="RefSeq" id="NP_001189775.1">
    <property type="nucleotide sequence ID" value="NM_001202846.1"/>
</dbReference>
<dbReference type="RefSeq" id="NP_850481.1">
    <molecule id="Q8VY21-1"/>
    <property type="nucleotide sequence ID" value="NM_180150.2"/>
</dbReference>
<dbReference type="SMR" id="Q8VY21"/>
<dbReference type="BioGRID" id="4737">
    <property type="interactions" value="6"/>
</dbReference>
<dbReference type="FunCoup" id="Q8VY21">
    <property type="interactions" value="2223"/>
</dbReference>
<dbReference type="IntAct" id="Q8VY21">
    <property type="interactions" value="2"/>
</dbReference>
<dbReference type="STRING" id="3702.Q8VY21"/>
<dbReference type="iPTMnet" id="Q8VY21"/>
<dbReference type="PaxDb" id="3702-AT2G47900.3"/>
<dbReference type="EnsemblPlants" id="AT2G47900.1">
    <molecule id="Q8VY21-1"/>
    <property type="protein sequence ID" value="AT2G47900.1"/>
    <property type="gene ID" value="AT2G47900"/>
</dbReference>
<dbReference type="EnsemblPlants" id="AT2G47900.2">
    <molecule id="Q8VY21-1"/>
    <property type="protein sequence ID" value="AT2G47900.2"/>
    <property type="gene ID" value="AT2G47900"/>
</dbReference>
<dbReference type="GeneID" id="819402"/>
<dbReference type="Gramene" id="AT2G47900.1">
    <molecule id="Q8VY21-1"/>
    <property type="protein sequence ID" value="AT2G47900.1"/>
    <property type="gene ID" value="AT2G47900"/>
</dbReference>
<dbReference type="Gramene" id="AT2G47900.2">
    <molecule id="Q8VY21-1"/>
    <property type="protein sequence ID" value="AT2G47900.2"/>
    <property type="gene ID" value="AT2G47900"/>
</dbReference>
<dbReference type="KEGG" id="ath:AT2G47900"/>
<dbReference type="Araport" id="AT2G47900"/>
<dbReference type="TAIR" id="AT2G47900">
    <property type="gene designation" value="TLP3"/>
</dbReference>
<dbReference type="eggNOG" id="KOG2502">
    <property type="taxonomic scope" value="Eukaryota"/>
</dbReference>
<dbReference type="HOGENOM" id="CLU_028236_3_0_1"/>
<dbReference type="InParanoid" id="Q8VY21"/>
<dbReference type="OrthoDB" id="8775810at2759"/>
<dbReference type="PhylomeDB" id="Q8VY21"/>
<dbReference type="PRO" id="PR:Q8VY21"/>
<dbReference type="Proteomes" id="UP000006548">
    <property type="component" value="Chromosome 2"/>
</dbReference>
<dbReference type="ExpressionAtlas" id="Q8VY21">
    <property type="expression patterns" value="baseline and differential"/>
</dbReference>
<dbReference type="GO" id="GO:0005654">
    <property type="term" value="C:nucleoplasm"/>
    <property type="evidence" value="ECO:0007669"/>
    <property type="project" value="UniProtKB-SubCell"/>
</dbReference>
<dbReference type="GO" id="GO:0005886">
    <property type="term" value="C:plasma membrane"/>
    <property type="evidence" value="ECO:0007669"/>
    <property type="project" value="UniProtKB-SubCell"/>
</dbReference>
<dbReference type="GO" id="GO:0009536">
    <property type="term" value="C:plastid"/>
    <property type="evidence" value="ECO:0007669"/>
    <property type="project" value="UniProtKB-SubCell"/>
</dbReference>
<dbReference type="CDD" id="cd22153">
    <property type="entry name" value="F-box_AtTLP-like"/>
    <property type="match status" value="1"/>
</dbReference>
<dbReference type="FunFam" id="3.20.90.10:FF:000003">
    <property type="entry name" value="Tubby-like F-box protein"/>
    <property type="match status" value="1"/>
</dbReference>
<dbReference type="Gene3D" id="3.20.90.10">
    <property type="entry name" value="Tubby Protein, Chain A"/>
    <property type="match status" value="1"/>
</dbReference>
<dbReference type="InterPro" id="IPR025659">
    <property type="entry name" value="Tubby-like_C"/>
</dbReference>
<dbReference type="InterPro" id="IPR000007">
    <property type="entry name" value="Tubby_C"/>
</dbReference>
<dbReference type="PANTHER" id="PTHR16517:SF119">
    <property type="entry name" value="TUBBY-LIKE F-BOX PROTEIN 3"/>
    <property type="match status" value="1"/>
</dbReference>
<dbReference type="PANTHER" id="PTHR16517">
    <property type="entry name" value="TUBBY-RELATED"/>
    <property type="match status" value="1"/>
</dbReference>
<dbReference type="Pfam" id="PF01167">
    <property type="entry name" value="Tub"/>
    <property type="match status" value="1"/>
</dbReference>
<dbReference type="PRINTS" id="PR01573">
    <property type="entry name" value="SUPERTUBBY"/>
</dbReference>
<dbReference type="SUPFAM" id="SSF54518">
    <property type="entry name" value="Tubby C-terminal domain-like"/>
    <property type="match status" value="1"/>
</dbReference>
<feature type="chain" id="PRO_0000272231" description="Tubby-like F-box protein 3">
    <location>
        <begin position="1"/>
        <end position="406"/>
    </location>
</feature>
<feature type="domain" description="F-box" evidence="1">
    <location>
        <begin position="50"/>
        <end position="105"/>
    </location>
</feature>
<feature type="mutagenesis site" description="Loss of plasma membrane tethering; when associated with A-189." evidence="3">
    <original>K</original>
    <variation>A</variation>
    <location>
        <position position="187"/>
    </location>
</feature>
<feature type="mutagenesis site" description="Loss of plasma membrane tethering; when associated with A-187." evidence="3">
    <original>R</original>
    <variation>A</variation>
    <location>
        <position position="189"/>
    </location>
</feature>
<accession>Q8VY21</accession>
<accession>O82257</accession>
<proteinExistence type="evidence at protein level"/>
<gene>
    <name evidence="5" type="primary">TULP3</name>
    <name evidence="4" type="synonym">TLP3</name>
    <name evidence="6" type="ordered locus">At2g47900</name>
    <name evidence="7" type="ORF">F17A22.29</name>
    <name evidence="8" type="ORF">T9J23.6</name>
</gene>
<protein>
    <recommendedName>
        <fullName evidence="4">Tubby-like F-box protein 3</fullName>
        <shortName evidence="4">AtTLP3</shortName>
    </recommendedName>
</protein>
<reference key="1">
    <citation type="journal article" date="2004" name="Plant Physiol.">
        <title>Molecular analyses of the Arabidopsis TUBBY-like protein gene family.</title>
        <authorList>
            <person name="Lai C.-P."/>
            <person name="Lee C.-L."/>
            <person name="Chen P.-H."/>
            <person name="Wu S.-H."/>
            <person name="Yang C.-C."/>
            <person name="Shaw J.-F."/>
        </authorList>
    </citation>
    <scope>NUCLEOTIDE SEQUENCE [MRNA]</scope>
    <scope>TISSUE SPECIFICITY</scope>
    <scope>GENE FAMILY</scope>
    <scope>NOMENCLATURE</scope>
</reference>
<reference key="2">
    <citation type="journal article" date="1999" name="Nature">
        <title>Sequence and analysis of chromosome 2 of the plant Arabidopsis thaliana.</title>
        <authorList>
            <person name="Lin X."/>
            <person name="Kaul S."/>
            <person name="Rounsley S.D."/>
            <person name="Shea T.P."/>
            <person name="Benito M.-I."/>
            <person name="Town C.D."/>
            <person name="Fujii C.Y."/>
            <person name="Mason T.M."/>
            <person name="Bowman C.L."/>
            <person name="Barnstead M.E."/>
            <person name="Feldblyum T.V."/>
            <person name="Buell C.R."/>
            <person name="Ketchum K.A."/>
            <person name="Lee J.J."/>
            <person name="Ronning C.M."/>
            <person name="Koo H.L."/>
            <person name="Moffat K.S."/>
            <person name="Cronin L.A."/>
            <person name="Shen M."/>
            <person name="Pai G."/>
            <person name="Van Aken S."/>
            <person name="Umayam L."/>
            <person name="Tallon L.J."/>
            <person name="Gill J.E."/>
            <person name="Adams M.D."/>
            <person name="Carrera A.J."/>
            <person name="Creasy T.H."/>
            <person name="Goodman H.M."/>
            <person name="Somerville C.R."/>
            <person name="Copenhaver G.P."/>
            <person name="Preuss D."/>
            <person name="Nierman W.C."/>
            <person name="White O."/>
            <person name="Eisen J.A."/>
            <person name="Salzberg S.L."/>
            <person name="Fraser C.M."/>
            <person name="Venter J.C."/>
        </authorList>
    </citation>
    <scope>NUCLEOTIDE SEQUENCE [LARGE SCALE GENOMIC DNA]</scope>
    <source>
        <strain>cv. Columbia</strain>
    </source>
</reference>
<reference key="3">
    <citation type="journal article" date="2017" name="Plant J.">
        <title>Araport11: a complete reannotation of the Arabidopsis thaliana reference genome.</title>
        <authorList>
            <person name="Cheng C.Y."/>
            <person name="Krishnakumar V."/>
            <person name="Chan A.P."/>
            <person name="Thibaud-Nissen F."/>
            <person name="Schobel S."/>
            <person name="Town C.D."/>
        </authorList>
    </citation>
    <scope>GENOME REANNOTATION</scope>
    <source>
        <strain>cv. Columbia</strain>
    </source>
</reference>
<reference key="4">
    <citation type="journal article" date="2003" name="Science">
        <title>Empirical analysis of transcriptional activity in the Arabidopsis genome.</title>
        <authorList>
            <person name="Yamada K."/>
            <person name="Lim J."/>
            <person name="Dale J.M."/>
            <person name="Chen H."/>
            <person name="Shinn P."/>
            <person name="Palm C.J."/>
            <person name="Southwick A.M."/>
            <person name="Wu H.C."/>
            <person name="Kim C.J."/>
            <person name="Nguyen M."/>
            <person name="Pham P.K."/>
            <person name="Cheuk R.F."/>
            <person name="Karlin-Newmann G."/>
            <person name="Liu S.X."/>
            <person name="Lam B."/>
            <person name="Sakano H."/>
            <person name="Wu T."/>
            <person name="Yu G."/>
            <person name="Miranda M."/>
            <person name="Quach H.L."/>
            <person name="Tripp M."/>
            <person name="Chang C.H."/>
            <person name="Lee J.M."/>
            <person name="Toriumi M.J."/>
            <person name="Chan M.M."/>
            <person name="Tang C.C."/>
            <person name="Onodera C.S."/>
            <person name="Deng J.M."/>
            <person name="Akiyama K."/>
            <person name="Ansari Y."/>
            <person name="Arakawa T."/>
            <person name="Banh J."/>
            <person name="Banno F."/>
            <person name="Bowser L."/>
            <person name="Brooks S.Y."/>
            <person name="Carninci P."/>
            <person name="Chao Q."/>
            <person name="Choy N."/>
            <person name="Enju A."/>
            <person name="Goldsmith A.D."/>
            <person name="Gurjal M."/>
            <person name="Hansen N.F."/>
            <person name="Hayashizaki Y."/>
            <person name="Johnson-Hopson C."/>
            <person name="Hsuan V.W."/>
            <person name="Iida K."/>
            <person name="Karnes M."/>
            <person name="Khan S."/>
            <person name="Koesema E."/>
            <person name="Ishida J."/>
            <person name="Jiang P.X."/>
            <person name="Jones T."/>
            <person name="Kawai J."/>
            <person name="Kamiya A."/>
            <person name="Meyers C."/>
            <person name="Nakajima M."/>
            <person name="Narusaka M."/>
            <person name="Seki M."/>
            <person name="Sakurai T."/>
            <person name="Satou M."/>
            <person name="Tamse R."/>
            <person name="Vaysberg M."/>
            <person name="Wallender E.K."/>
            <person name="Wong C."/>
            <person name="Yamamura Y."/>
            <person name="Yuan S."/>
            <person name="Shinozaki K."/>
            <person name="Davis R.W."/>
            <person name="Theologis A."/>
            <person name="Ecker J.R."/>
        </authorList>
    </citation>
    <scope>NUCLEOTIDE SEQUENCE [LARGE SCALE MRNA]</scope>
    <source>
        <strain>cv. Columbia</strain>
    </source>
</reference>
<reference key="5">
    <citation type="journal article" date="2012" name="Plant Physiol.">
        <title>The subcellular localization of Tubby-like proteins and participation in stress signaling and root colonization by the mutualist Piriformospora indica.</title>
        <authorList>
            <person name="Reitz M.U."/>
            <person name="Bissue J.K."/>
            <person name="Zocher K."/>
            <person name="Attard A."/>
            <person name="Huckelhoven R."/>
            <person name="Becker K."/>
            <person name="Imani J."/>
            <person name="Eichmann R."/>
            <person name="Schafer P."/>
        </authorList>
    </citation>
    <scope>FUNCTION</scope>
    <scope>DISRUPTION PHENOTYPE</scope>
    <scope>3D-STRUCTURE MODELING</scope>
    <scope>TISSUE SPECIFICITY</scope>
    <scope>INDUCTION BY H(2)O(2)</scope>
    <scope>SUBCELLULAR LOCATION</scope>
    <scope>MUTAGENESIS OF LYS-187 AND ARG-189</scope>
    <source>
        <strain>cv. Columbia</strain>
    </source>
</reference>
<name>TLP3_ARATH</name>
<sequence>MSFKSLIQDMRGELGSISRKGFDVRFGYGRSRSQRVVQDTSVPVDAFKQSCWASMPPELLRDVLMRIEQSEDTWPSRKNVVSCAGVCRNWREIVKEIVRVPELSSKLTFPISLKQPGPRGSLVQCYIMRNRSNQTYYLYLGLNQAASNDDGKFLLAAKRFRRPTCTDYIISLNCDDVSRGSNTYIGKLRSNFLGTKFTVYDAQPTNPGTQVTRTRSSRLLSLKQVSPRIPSGNYPVAHISYELNVLGSRGPRRMQCVMDAIPASAVEPGGTAPTQTELVHSNLDSFPSFSFFRSKSIRAESLPSGPSSAAQKEGLLVLKNKAPRWHEQLQCWCLNFNGRVTVASVKNFQLVAAPENGPAGPEHENVILQFGKVGKDVFTMDYQYPISAFQAFTICLSSFDTKIACE</sequence>
<keyword id="KW-0025">Alternative splicing</keyword>
<keyword id="KW-1003">Cell membrane</keyword>
<keyword id="KW-0963">Cytoplasm</keyword>
<keyword id="KW-0472">Membrane</keyword>
<keyword id="KW-0539">Nucleus</keyword>
<keyword id="KW-0934">Plastid</keyword>
<keyword id="KW-1185">Reference proteome</keyword>
<keyword id="KW-0346">Stress response</keyword>
<evidence type="ECO:0000255" key="1">
    <source>
        <dbReference type="PROSITE-ProRule" id="PRU00080"/>
    </source>
</evidence>
<evidence type="ECO:0000269" key="2">
    <source>
    </source>
</evidence>
<evidence type="ECO:0000269" key="3">
    <source>
    </source>
</evidence>
<evidence type="ECO:0000303" key="4">
    <source>
    </source>
</evidence>
<evidence type="ECO:0000305" key="5"/>
<evidence type="ECO:0000312" key="6">
    <source>
        <dbReference type="Araport" id="AT2G47900"/>
    </source>
</evidence>
<evidence type="ECO:0000312" key="7">
    <source>
        <dbReference type="EMBL" id="AAC63644.1"/>
    </source>
</evidence>
<evidence type="ECO:0000312" key="8">
    <source>
        <dbReference type="EMBL" id="AAM15124.1"/>
    </source>
</evidence>